<comment type="function">
    <text evidence="1">Responsible for the release of ribosomes from messenger RNA at the termination of protein biosynthesis. May increase the efficiency of translation by recycling ribosomes from one round of translation to another.</text>
</comment>
<comment type="subcellular location">
    <subcellularLocation>
        <location evidence="1">Cytoplasm</location>
    </subcellularLocation>
</comment>
<comment type="similarity">
    <text evidence="1">Belongs to the RRF family.</text>
</comment>
<name>RRF_SYNS3</name>
<feature type="chain" id="PRO_1000003298" description="Ribosome-recycling factor">
    <location>
        <begin position="1"/>
        <end position="182"/>
    </location>
</feature>
<feature type="region of interest" description="Disordered" evidence="2">
    <location>
        <begin position="136"/>
        <end position="158"/>
    </location>
</feature>
<gene>
    <name evidence="1" type="primary">frr</name>
    <name type="ordered locus">sync_2005</name>
</gene>
<reference key="1">
    <citation type="journal article" date="2006" name="Proc. Natl. Acad. Sci. U.S.A.">
        <title>Genome sequence of Synechococcus CC9311: insights into adaptation to a coastal environment.</title>
        <authorList>
            <person name="Palenik B."/>
            <person name="Ren Q."/>
            <person name="Dupont C.L."/>
            <person name="Myers G.S."/>
            <person name="Heidelberg J.F."/>
            <person name="Badger J.H."/>
            <person name="Madupu R."/>
            <person name="Nelson W.C."/>
            <person name="Brinkac L.M."/>
            <person name="Dodson R.J."/>
            <person name="Durkin A.S."/>
            <person name="Daugherty S.C."/>
            <person name="Sullivan S.A."/>
            <person name="Khouri H."/>
            <person name="Mohamoud Y."/>
            <person name="Halpin R."/>
            <person name="Paulsen I.T."/>
        </authorList>
    </citation>
    <scope>NUCLEOTIDE SEQUENCE [LARGE SCALE GENOMIC DNA]</scope>
    <source>
        <strain>CC9311</strain>
    </source>
</reference>
<dbReference type="EMBL" id="CP000435">
    <property type="protein sequence ID" value="ABI45660.1"/>
    <property type="molecule type" value="Genomic_DNA"/>
</dbReference>
<dbReference type="RefSeq" id="WP_011619920.1">
    <property type="nucleotide sequence ID" value="NC_008319.1"/>
</dbReference>
<dbReference type="SMR" id="Q0I8L4"/>
<dbReference type="STRING" id="64471.sync_2005"/>
<dbReference type="KEGG" id="syg:sync_2005"/>
<dbReference type="eggNOG" id="COG0233">
    <property type="taxonomic scope" value="Bacteria"/>
</dbReference>
<dbReference type="HOGENOM" id="CLU_073981_2_0_3"/>
<dbReference type="OrthoDB" id="9804006at2"/>
<dbReference type="Proteomes" id="UP000001961">
    <property type="component" value="Chromosome"/>
</dbReference>
<dbReference type="GO" id="GO:0005737">
    <property type="term" value="C:cytoplasm"/>
    <property type="evidence" value="ECO:0007669"/>
    <property type="project" value="UniProtKB-SubCell"/>
</dbReference>
<dbReference type="GO" id="GO:0043023">
    <property type="term" value="F:ribosomal large subunit binding"/>
    <property type="evidence" value="ECO:0007669"/>
    <property type="project" value="TreeGrafter"/>
</dbReference>
<dbReference type="GO" id="GO:0006415">
    <property type="term" value="P:translational termination"/>
    <property type="evidence" value="ECO:0007669"/>
    <property type="project" value="UniProtKB-UniRule"/>
</dbReference>
<dbReference type="CDD" id="cd00520">
    <property type="entry name" value="RRF"/>
    <property type="match status" value="1"/>
</dbReference>
<dbReference type="FunFam" id="1.10.132.20:FF:000001">
    <property type="entry name" value="Ribosome-recycling factor"/>
    <property type="match status" value="1"/>
</dbReference>
<dbReference type="FunFam" id="3.30.1360.40:FF:000001">
    <property type="entry name" value="Ribosome-recycling factor"/>
    <property type="match status" value="1"/>
</dbReference>
<dbReference type="Gene3D" id="3.30.1360.40">
    <property type="match status" value="1"/>
</dbReference>
<dbReference type="Gene3D" id="1.10.132.20">
    <property type="entry name" value="Ribosome-recycling factor"/>
    <property type="match status" value="1"/>
</dbReference>
<dbReference type="HAMAP" id="MF_00040">
    <property type="entry name" value="RRF"/>
    <property type="match status" value="1"/>
</dbReference>
<dbReference type="InterPro" id="IPR002661">
    <property type="entry name" value="Ribosome_recyc_fac"/>
</dbReference>
<dbReference type="InterPro" id="IPR023584">
    <property type="entry name" value="Ribosome_recyc_fac_dom"/>
</dbReference>
<dbReference type="InterPro" id="IPR036191">
    <property type="entry name" value="RRF_sf"/>
</dbReference>
<dbReference type="NCBIfam" id="TIGR00496">
    <property type="entry name" value="frr"/>
    <property type="match status" value="1"/>
</dbReference>
<dbReference type="PANTHER" id="PTHR20982:SF3">
    <property type="entry name" value="MITOCHONDRIAL RIBOSOME RECYCLING FACTOR PSEUDO 1"/>
    <property type="match status" value="1"/>
</dbReference>
<dbReference type="PANTHER" id="PTHR20982">
    <property type="entry name" value="RIBOSOME RECYCLING FACTOR"/>
    <property type="match status" value="1"/>
</dbReference>
<dbReference type="Pfam" id="PF01765">
    <property type="entry name" value="RRF"/>
    <property type="match status" value="1"/>
</dbReference>
<dbReference type="SUPFAM" id="SSF55194">
    <property type="entry name" value="Ribosome recycling factor, RRF"/>
    <property type="match status" value="1"/>
</dbReference>
<keyword id="KW-0963">Cytoplasm</keyword>
<keyword id="KW-0648">Protein biosynthesis</keyword>
<keyword id="KW-1185">Reference proteome</keyword>
<organism>
    <name type="scientific">Synechococcus sp. (strain CC9311)</name>
    <dbReference type="NCBI Taxonomy" id="64471"/>
    <lineage>
        <taxon>Bacteria</taxon>
        <taxon>Bacillati</taxon>
        <taxon>Cyanobacteriota</taxon>
        <taxon>Cyanophyceae</taxon>
        <taxon>Synechococcales</taxon>
        <taxon>Synechococcaceae</taxon>
        <taxon>Synechococcus</taxon>
    </lineage>
</organism>
<protein>
    <recommendedName>
        <fullName evidence="1">Ribosome-recycling factor</fullName>
        <shortName evidence="1">RRF</shortName>
    </recommendedName>
    <alternativeName>
        <fullName evidence="1">Ribosome-releasing factor</fullName>
    </alternativeName>
</protein>
<sequence length="182" mass="20469">MSNSDLEANMRKSVEATQRNFNTIRTGRANPSLLDRINVEYYGADTPLKSLASLSTPDSQTIAVQPFDMGSLALIEKAIATSDLGFTPNNDGKIIRINVPPLTEERRKEFCKLAAKYSEEGKVALRSVRRDAIDKIKKQEKEGDLSEDQSRDEQDQVQKTTDRFIAELEKHLADKEVEILKV</sequence>
<accession>Q0I8L4</accession>
<evidence type="ECO:0000255" key="1">
    <source>
        <dbReference type="HAMAP-Rule" id="MF_00040"/>
    </source>
</evidence>
<evidence type="ECO:0000256" key="2">
    <source>
        <dbReference type="SAM" id="MobiDB-lite"/>
    </source>
</evidence>
<proteinExistence type="inferred from homology"/>